<dbReference type="EMBL" id="U10091">
    <property type="protein sequence ID" value="AAA50219.1"/>
    <property type="molecule type" value="mRNA"/>
</dbReference>
<dbReference type="CCDS" id="CCDS20596.1"/>
<dbReference type="PIR" id="I49050">
    <property type="entry name" value="I49050"/>
</dbReference>
<dbReference type="RefSeq" id="NP_032489.1">
    <property type="nucleotide sequence ID" value="NM_008463.2"/>
</dbReference>
<dbReference type="SMR" id="Q60652"/>
<dbReference type="FunCoup" id="Q60652">
    <property type="interactions" value="525"/>
</dbReference>
<dbReference type="STRING" id="10090.ENSMUSP00000112795"/>
<dbReference type="GlyCosmos" id="Q60652">
    <property type="glycosylation" value="3 sites, No reported glycans"/>
</dbReference>
<dbReference type="GlyGen" id="Q60652">
    <property type="glycosylation" value="3 sites"/>
</dbReference>
<dbReference type="PaxDb" id="10090-ENSMUSP00000112795"/>
<dbReference type="DNASU" id="16636"/>
<dbReference type="Ensembl" id="ENSMUST00000014683.13">
    <property type="protein sequence ID" value="ENSMUSP00000014683.7"/>
    <property type="gene ID" value="ENSMUSG00000030173.16"/>
</dbReference>
<dbReference type="Ensembl" id="ENSMUST00000118060.8">
    <property type="protein sequence ID" value="ENSMUSP00000112795.2"/>
    <property type="gene ID" value="ENSMUSG00000030173.16"/>
</dbReference>
<dbReference type="GeneID" id="16636"/>
<dbReference type="KEGG" id="mmu:16636"/>
<dbReference type="UCSC" id="uc009egx.2">
    <property type="organism name" value="mouse"/>
</dbReference>
<dbReference type="AGR" id="MGI:101903"/>
<dbReference type="CTD" id="16636"/>
<dbReference type="MGI" id="MGI:101903">
    <property type="gene designation" value="Klra5"/>
</dbReference>
<dbReference type="VEuPathDB" id="HostDB:ENSMUSG00000030173"/>
<dbReference type="eggNOG" id="KOG4297">
    <property type="taxonomic scope" value="Eukaryota"/>
</dbReference>
<dbReference type="GeneTree" id="ENSGT00390000008117"/>
<dbReference type="HOGENOM" id="CLU_049894_1_0_1"/>
<dbReference type="InParanoid" id="Q60652"/>
<dbReference type="OMA" id="NTECSNA"/>
<dbReference type="OrthoDB" id="2142683at2759"/>
<dbReference type="PhylomeDB" id="Q60652"/>
<dbReference type="TreeFam" id="TF336674"/>
<dbReference type="BioGRID-ORCS" id="16636">
    <property type="hits" value="0 hits in 75 CRISPR screens"/>
</dbReference>
<dbReference type="ChiTaRS" id="Klra5">
    <property type="organism name" value="mouse"/>
</dbReference>
<dbReference type="PRO" id="PR:Q60652"/>
<dbReference type="Proteomes" id="UP000000589">
    <property type="component" value="Chromosome 6"/>
</dbReference>
<dbReference type="RNAct" id="Q60652">
    <property type="molecule type" value="protein"/>
</dbReference>
<dbReference type="Bgee" id="ENSMUSG00000030173">
    <property type="expression patterns" value="Expressed in granulocyte and 24 other cell types or tissues"/>
</dbReference>
<dbReference type="ExpressionAtlas" id="Q60652">
    <property type="expression patterns" value="baseline and differential"/>
</dbReference>
<dbReference type="GO" id="GO:0005886">
    <property type="term" value="C:plasma membrane"/>
    <property type="evidence" value="ECO:0000304"/>
    <property type="project" value="MGI"/>
</dbReference>
<dbReference type="GO" id="GO:0030246">
    <property type="term" value="F:carbohydrate binding"/>
    <property type="evidence" value="ECO:0007669"/>
    <property type="project" value="UniProtKB-KW"/>
</dbReference>
<dbReference type="GO" id="GO:0007155">
    <property type="term" value="P:cell adhesion"/>
    <property type="evidence" value="ECO:0007669"/>
    <property type="project" value="UniProtKB-KW"/>
</dbReference>
<dbReference type="CDD" id="cd03593">
    <property type="entry name" value="CLECT_NK_receptors_like"/>
    <property type="match status" value="1"/>
</dbReference>
<dbReference type="FunFam" id="3.10.100.10:FF:000053">
    <property type="entry name" value="Killer cell lectin-like receptor 3"/>
    <property type="match status" value="1"/>
</dbReference>
<dbReference type="Gene3D" id="3.10.100.10">
    <property type="entry name" value="Mannose-Binding Protein A, subunit A"/>
    <property type="match status" value="1"/>
</dbReference>
<dbReference type="InterPro" id="IPR001304">
    <property type="entry name" value="C-type_lectin-like"/>
</dbReference>
<dbReference type="InterPro" id="IPR016186">
    <property type="entry name" value="C-type_lectin-like/link_sf"/>
</dbReference>
<dbReference type="InterPro" id="IPR016187">
    <property type="entry name" value="CTDL_fold"/>
</dbReference>
<dbReference type="InterPro" id="IPR013600">
    <property type="entry name" value="Ly49_N"/>
</dbReference>
<dbReference type="InterPro" id="IPR052013">
    <property type="entry name" value="Mouse_KLRs"/>
</dbReference>
<dbReference type="InterPro" id="IPR033992">
    <property type="entry name" value="NKR-like_CTLD"/>
</dbReference>
<dbReference type="PANTHER" id="PTHR46329">
    <property type="entry name" value="KILLER CELL LECTIN-LIKE RECEPTOR 2"/>
    <property type="match status" value="1"/>
</dbReference>
<dbReference type="PANTHER" id="PTHR46329:SF3">
    <property type="entry name" value="KILLER CELL LECTIN-LIKE RECEPTOR 3-RELATED"/>
    <property type="match status" value="1"/>
</dbReference>
<dbReference type="Pfam" id="PF00059">
    <property type="entry name" value="Lectin_C"/>
    <property type="match status" value="1"/>
</dbReference>
<dbReference type="Pfam" id="PF08391">
    <property type="entry name" value="Ly49"/>
    <property type="match status" value="1"/>
</dbReference>
<dbReference type="SMART" id="SM00034">
    <property type="entry name" value="CLECT"/>
    <property type="match status" value="1"/>
</dbReference>
<dbReference type="SUPFAM" id="SSF56436">
    <property type="entry name" value="C-type lectin-like"/>
    <property type="match status" value="1"/>
</dbReference>
<dbReference type="PROSITE" id="PS50041">
    <property type="entry name" value="C_TYPE_LECTIN_2"/>
    <property type="match status" value="1"/>
</dbReference>
<sequence>MSEPEVTYSTVRLHKSSGLQRLVSHEEIQGPGEAGYRKCSVPWQLTVRSLGIFCFLLLVTVAVLAVKIFQYSQHKQEIHETLNHNHNCSNMQSDIKLKEEMLRNKSIDCSPGEELLESLNREQNRWYSETKTDLDSSQDTGTGVKHWFCYGTKCFYFIMSKNTWSGCKQTCQHYSLPLVKIEDEDELKFLQFQVISDSYWIGLSYDKKKKQWAWIDNGPSKLDMKTRKMNFKPGGCIFLSKTRLEDTNCNNSYFCICGKKLDHFPG</sequence>
<name>KLRA5_MOUSE</name>
<proteinExistence type="evidence at protein level"/>
<feature type="chain" id="PRO_0000046683" description="Killer cell lectin-like receptor 5">
    <location>
        <begin position="1"/>
        <end position="266"/>
    </location>
</feature>
<feature type="topological domain" description="Cytoplasmic" evidence="1">
    <location>
        <begin position="1"/>
        <end position="44"/>
    </location>
</feature>
<feature type="transmembrane region" description="Helical; Signal-anchor for type II membrane protein" evidence="1">
    <location>
        <begin position="45"/>
        <end position="66"/>
    </location>
</feature>
<feature type="topological domain" description="Extracellular" evidence="1">
    <location>
        <begin position="67"/>
        <end position="266"/>
    </location>
</feature>
<feature type="domain" description="C-type lectin" evidence="2">
    <location>
        <begin position="143"/>
        <end position="261"/>
    </location>
</feature>
<feature type="glycosylation site" description="N-linked (GlcNAc...) asparagine" evidence="1">
    <location>
        <position position="87"/>
    </location>
</feature>
<feature type="glycosylation site" description="N-linked (GlcNAc...) asparagine" evidence="1">
    <location>
        <position position="104"/>
    </location>
</feature>
<feature type="glycosylation site" description="N-linked (GlcNAc...) asparagine" evidence="1">
    <location>
        <position position="250"/>
    </location>
</feature>
<feature type="disulfide bond" evidence="2">
    <location>
        <begin position="149"/>
        <end position="154"/>
    </location>
</feature>
<feature type="disulfide bond" evidence="2">
    <location>
        <begin position="167"/>
        <end position="255"/>
    </location>
</feature>
<feature type="disulfide bond" evidence="2">
    <location>
        <begin position="171"/>
        <end position="257"/>
    </location>
</feature>
<feature type="disulfide bond" evidence="2">
    <location>
        <begin position="236"/>
        <end position="249"/>
    </location>
</feature>
<organism>
    <name type="scientific">Mus musculus</name>
    <name type="common">Mouse</name>
    <dbReference type="NCBI Taxonomy" id="10090"/>
    <lineage>
        <taxon>Eukaryota</taxon>
        <taxon>Metazoa</taxon>
        <taxon>Chordata</taxon>
        <taxon>Craniata</taxon>
        <taxon>Vertebrata</taxon>
        <taxon>Euteleostomi</taxon>
        <taxon>Mammalia</taxon>
        <taxon>Eutheria</taxon>
        <taxon>Euarchontoglires</taxon>
        <taxon>Glires</taxon>
        <taxon>Rodentia</taxon>
        <taxon>Myomorpha</taxon>
        <taxon>Muroidea</taxon>
        <taxon>Muridae</taxon>
        <taxon>Murinae</taxon>
        <taxon>Mus</taxon>
        <taxon>Mus</taxon>
    </lineage>
</organism>
<evidence type="ECO:0000255" key="1"/>
<evidence type="ECO:0000255" key="2">
    <source>
        <dbReference type="PROSITE-ProRule" id="PRU00040"/>
    </source>
</evidence>
<evidence type="ECO:0000269" key="3">
    <source>
    </source>
</evidence>
<accession>Q60652</accession>
<keyword id="KW-0130">Cell adhesion</keyword>
<keyword id="KW-1015">Disulfide bond</keyword>
<keyword id="KW-0325">Glycoprotein</keyword>
<keyword id="KW-0430">Lectin</keyword>
<keyword id="KW-0472">Membrane</keyword>
<keyword id="KW-0675">Receptor</keyword>
<keyword id="KW-1185">Reference proteome</keyword>
<keyword id="KW-0735">Signal-anchor</keyword>
<keyword id="KW-0812">Transmembrane</keyword>
<keyword id="KW-1133">Transmembrane helix</keyword>
<comment type="function">
    <text>Receptor on natural killer (NK) cells for class I MHC.</text>
</comment>
<comment type="subunit">
    <text evidence="3">Homodimer; disulfide-linked.</text>
</comment>
<comment type="subcellular location">
    <subcellularLocation>
        <location>Membrane</location>
        <topology>Single-pass type II membrane protein</topology>
    </subcellularLocation>
</comment>
<comment type="tissue specificity">
    <text evidence="3">Mostly expressed in NK cells, but also observed on NK T and memory T-cells.</text>
</comment>
<protein>
    <recommendedName>
        <fullName>Killer cell lectin-like receptor 5</fullName>
    </recommendedName>
    <alternativeName>
        <fullName>Lymphocyte antigen 49e</fullName>
        <shortName>Ly-49e</shortName>
    </alternativeName>
    <alternativeName>
        <fullName>T-cell surface glycoprotein Ly-49E</fullName>
    </alternativeName>
</protein>
<gene>
    <name type="primary">Klra5</name>
    <name type="synonym">Ly-49e</name>
    <name type="synonym">Ly49-e</name>
    <name type="synonym">Ly49e</name>
</gene>
<reference key="1">
    <citation type="journal article" date="1994" name="J. Immunol.">
        <title>Ly-49 multigene family expressed by IL-2-activated NK cells.</title>
        <authorList>
            <person name="Smith H.R.C."/>
            <person name="Karlhofer F.M."/>
            <person name="Yokoyama W.M."/>
        </authorList>
    </citation>
    <scope>NUCLEOTIDE SEQUENCE [MRNA]</scope>
    <source>
        <strain>C57BL/6J</strain>
        <tissue>Spleen</tissue>
    </source>
</reference>
<reference key="2">
    <citation type="journal article" date="2001" name="J. Immunol.">
        <title>Expression of Ly49E and CD94/NKG2 on fetal and adult NK cells.</title>
        <authorList>
            <person name="Van Beneden K."/>
            <person name="Stevenaert F."/>
            <person name="De Creus A."/>
            <person name="Debacker V."/>
            <person name="De Boever J."/>
            <person name="Plum J."/>
            <person name="Leclercq G."/>
        </authorList>
    </citation>
    <scope>SUBUNIT</scope>
    <scope>TISSUE SPECIFICITY</scope>
</reference>